<protein>
    <recommendedName>
        <fullName evidence="5">Cap-specific mRNA (nucleoside-2'-O-)-methyltransferase 1</fullName>
        <ecNumber evidence="4">2.1.1.57</ecNumber>
    </recommendedName>
    <alternativeName>
        <fullName evidence="6">Cap1 2'O-ribose methyltransferase 1</fullName>
        <shortName evidence="6">MTr1</shortName>
    </alternativeName>
</protein>
<organism>
    <name type="scientific">Drosophila melanogaster</name>
    <name type="common">Fruit fly</name>
    <dbReference type="NCBI Taxonomy" id="7227"/>
    <lineage>
        <taxon>Eukaryota</taxon>
        <taxon>Metazoa</taxon>
        <taxon>Ecdysozoa</taxon>
        <taxon>Arthropoda</taxon>
        <taxon>Hexapoda</taxon>
        <taxon>Insecta</taxon>
        <taxon>Pterygota</taxon>
        <taxon>Neoptera</taxon>
        <taxon>Endopterygota</taxon>
        <taxon>Diptera</taxon>
        <taxon>Brachycera</taxon>
        <taxon>Muscomorpha</taxon>
        <taxon>Ephydroidea</taxon>
        <taxon>Drosophilidae</taxon>
        <taxon>Drosophila</taxon>
        <taxon>Sophophora</taxon>
    </lineage>
</organism>
<comment type="function">
    <text evidence="4">S-adenosyl-L-methionine-dependent methyltransferase that mediates mRNA cap1 2'-O-ribose methylation to the 5'-cap structure of mRNAs (PubMed:32504809). Methylates the ribose of the first nucleotide of a m(7)GpppG-capped mRNA to produce m(7)GpppNmp (cap1) (PubMed:32504809). Positively regulates the Ago2-dependent small RNA pathway, with roles in both siRNA biogenesis and RISC assembly (PubMed:32504809). Involved in facilitating conversion of pre-RISC into holo-RISC, possibly by promoting the unwinding of Ago2-bound siRNA duplexes and thus the retention of the guide strand in holo-RISC (PubMed:32504809).</text>
</comment>
<comment type="catalytic activity">
    <reaction evidence="4">
        <text>a 5'-end (N(7)-methyl 5'-triphosphoguanosine)-ribonucleoside in mRNA + S-adenosyl-L-methionine = a 5'-end (N(7)-methyl 5'-triphosphoguanosine)-(2'-O-methyl-ribonucleoside) in mRNA + S-adenosyl-L-homocysteine + H(+)</text>
        <dbReference type="Rhea" id="RHEA:67020"/>
        <dbReference type="Rhea" id="RHEA-COMP:17167"/>
        <dbReference type="Rhea" id="RHEA-COMP:17168"/>
        <dbReference type="ChEBI" id="CHEBI:15378"/>
        <dbReference type="ChEBI" id="CHEBI:57856"/>
        <dbReference type="ChEBI" id="CHEBI:59789"/>
        <dbReference type="ChEBI" id="CHEBI:156461"/>
        <dbReference type="ChEBI" id="CHEBI:167609"/>
        <dbReference type="EC" id="2.1.1.57"/>
    </reaction>
</comment>
<comment type="subunit">
    <text evidence="4">Interacts (via C-terminus) with r2d2 (via C-terminus).</text>
</comment>
<comment type="subcellular location">
    <subcellularLocation>
        <location evidence="4">Nucleus</location>
    </subcellularLocation>
    <subcellularLocation>
        <location evidence="4">Cytoplasm</location>
    </subcellularLocation>
</comment>
<dbReference type="EC" id="2.1.1.57" evidence="4"/>
<dbReference type="EMBL" id="AE014298">
    <property type="protein sequence ID" value="AAF45915.1"/>
    <property type="molecule type" value="Genomic_DNA"/>
</dbReference>
<dbReference type="EMBL" id="AY071576">
    <property type="protein sequence ID" value="AAL49198.1"/>
    <property type="molecule type" value="mRNA"/>
</dbReference>
<dbReference type="EMBL" id="EU217444">
    <property type="protein sequence ID" value="ABW92363.1"/>
    <property type="molecule type" value="Genomic_DNA"/>
</dbReference>
<dbReference type="EMBL" id="EU217445">
    <property type="protein sequence ID" value="ABW92364.1"/>
    <property type="molecule type" value="Genomic_DNA"/>
</dbReference>
<dbReference type="EMBL" id="EU217446">
    <property type="protein sequence ID" value="ABW92365.1"/>
    <property type="molecule type" value="Genomic_DNA"/>
</dbReference>
<dbReference type="EMBL" id="EU217447">
    <property type="protein sequence ID" value="ABW92366.1"/>
    <property type="molecule type" value="Genomic_DNA"/>
</dbReference>
<dbReference type="EMBL" id="EU217448">
    <property type="protein sequence ID" value="ABW92367.1"/>
    <property type="molecule type" value="Genomic_DNA"/>
</dbReference>
<dbReference type="EMBL" id="EU217449">
    <property type="protein sequence ID" value="ABW92368.1"/>
    <property type="molecule type" value="Genomic_DNA"/>
</dbReference>
<dbReference type="EMBL" id="EU217450">
    <property type="protein sequence ID" value="ABW92369.1"/>
    <property type="molecule type" value="Genomic_DNA"/>
</dbReference>
<dbReference type="EMBL" id="EU217451">
    <property type="protein sequence ID" value="ABW92370.1"/>
    <property type="molecule type" value="Genomic_DNA"/>
</dbReference>
<dbReference type="EMBL" id="EU217452">
    <property type="protein sequence ID" value="ABW92371.1"/>
    <property type="molecule type" value="Genomic_DNA"/>
</dbReference>
<dbReference type="EMBL" id="EU217453">
    <property type="protein sequence ID" value="ABW92372.1"/>
    <property type="molecule type" value="Genomic_DNA"/>
</dbReference>
<dbReference type="EMBL" id="EU217454">
    <property type="protein sequence ID" value="ABW92373.1"/>
    <property type="molecule type" value="Genomic_DNA"/>
</dbReference>
<dbReference type="EMBL" id="EU217455">
    <property type="protein sequence ID" value="ABW92374.1"/>
    <property type="molecule type" value="Genomic_DNA"/>
</dbReference>
<dbReference type="RefSeq" id="NP_001284851.1">
    <property type="nucleotide sequence ID" value="NM_001297922.1"/>
</dbReference>
<dbReference type="RefSeq" id="NP_572148.2">
    <property type="nucleotide sequence ID" value="NM_131920.4"/>
</dbReference>
<dbReference type="SMR" id="Q9W4N2"/>
<dbReference type="BioGRID" id="57873">
    <property type="interactions" value="3"/>
</dbReference>
<dbReference type="FunCoup" id="Q9W4N2">
    <property type="interactions" value="2758"/>
</dbReference>
<dbReference type="STRING" id="7227.FBpp0309962"/>
<dbReference type="PaxDb" id="7227-FBpp0070639"/>
<dbReference type="EnsemblMetazoa" id="FBtr0070671">
    <property type="protein sequence ID" value="FBpp0070639"/>
    <property type="gene ID" value="FBgn0029693"/>
</dbReference>
<dbReference type="EnsemblMetazoa" id="FBtr0343297">
    <property type="protein sequence ID" value="FBpp0309962"/>
    <property type="gene ID" value="FBgn0029693"/>
</dbReference>
<dbReference type="GeneID" id="31355"/>
<dbReference type="KEGG" id="dme:Dmel_CG6379"/>
<dbReference type="UCSC" id="CG6379-RA">
    <property type="organism name" value="d. melanogaster"/>
</dbReference>
<dbReference type="AGR" id="FB:FBgn0029693"/>
<dbReference type="CTD" id="23070"/>
<dbReference type="FlyBase" id="FBgn0029693">
    <property type="gene designation" value="Cmtr1"/>
</dbReference>
<dbReference type="VEuPathDB" id="VectorBase:FBgn0029693"/>
<dbReference type="eggNOG" id="KOG3673">
    <property type="taxonomic scope" value="Eukaryota"/>
</dbReference>
<dbReference type="HOGENOM" id="CLU_011097_0_0_1"/>
<dbReference type="InParanoid" id="Q9W4N2"/>
<dbReference type="OMA" id="CTLFLCK"/>
<dbReference type="OrthoDB" id="10251234at2759"/>
<dbReference type="PhylomeDB" id="Q9W4N2"/>
<dbReference type="BioGRID-ORCS" id="31355">
    <property type="hits" value="0 hits in 1 CRISPR screen"/>
</dbReference>
<dbReference type="GenomeRNAi" id="31355"/>
<dbReference type="PRO" id="PR:Q9W4N2"/>
<dbReference type="Proteomes" id="UP000000803">
    <property type="component" value="Chromosome X"/>
</dbReference>
<dbReference type="Bgee" id="FBgn0029693">
    <property type="expression patterns" value="Expressed in T neuron T5d (Drosophila) in embryonic/larval optic lobe (Drosophila) and 69 other cell types or tissues"/>
</dbReference>
<dbReference type="ExpressionAtlas" id="Q9W4N2">
    <property type="expression patterns" value="baseline and differential"/>
</dbReference>
<dbReference type="GO" id="GO:0005737">
    <property type="term" value="C:cytoplasm"/>
    <property type="evidence" value="ECO:0000314"/>
    <property type="project" value="UniProtKB"/>
</dbReference>
<dbReference type="GO" id="GO:0005634">
    <property type="term" value="C:nucleus"/>
    <property type="evidence" value="ECO:0000314"/>
    <property type="project" value="UniProtKB"/>
</dbReference>
<dbReference type="GO" id="GO:0004483">
    <property type="term" value="F:mRNA (nucleoside-2'-O-)-methyltransferase activity"/>
    <property type="evidence" value="ECO:0000315"/>
    <property type="project" value="FlyBase"/>
</dbReference>
<dbReference type="GO" id="GO:0003676">
    <property type="term" value="F:nucleic acid binding"/>
    <property type="evidence" value="ECO:0007669"/>
    <property type="project" value="InterPro"/>
</dbReference>
<dbReference type="GO" id="GO:0006370">
    <property type="term" value="P:7-methylguanosine mRNA capping"/>
    <property type="evidence" value="ECO:0000315"/>
    <property type="project" value="FlyBase"/>
</dbReference>
<dbReference type="GO" id="GO:0032259">
    <property type="term" value="P:methylation"/>
    <property type="evidence" value="ECO:0007669"/>
    <property type="project" value="UniProtKB-KW"/>
</dbReference>
<dbReference type="GO" id="GO:0006397">
    <property type="term" value="P:mRNA processing"/>
    <property type="evidence" value="ECO:0000250"/>
    <property type="project" value="UniProtKB"/>
</dbReference>
<dbReference type="GO" id="GO:1904582">
    <property type="term" value="P:positive regulation of intracellular mRNA localization"/>
    <property type="evidence" value="ECO:0000316"/>
    <property type="project" value="FlyBase"/>
</dbReference>
<dbReference type="GO" id="GO:0070922">
    <property type="term" value="P:RISC complex assembly"/>
    <property type="evidence" value="ECO:0000315"/>
    <property type="project" value="FlyBase"/>
</dbReference>
<dbReference type="FunFam" id="3.40.50.12760:FF:000004">
    <property type="entry name" value="FtsJ-like methyltransferase"/>
    <property type="match status" value="1"/>
</dbReference>
<dbReference type="Gene3D" id="3.40.50.12760">
    <property type="match status" value="1"/>
</dbReference>
<dbReference type="InterPro" id="IPR000467">
    <property type="entry name" value="G_patch_dom"/>
</dbReference>
<dbReference type="InterPro" id="IPR050851">
    <property type="entry name" value="mRNA_Cap_2O-Ribose_MeTrfase"/>
</dbReference>
<dbReference type="InterPro" id="IPR002877">
    <property type="entry name" value="RNA_MeTrfase_FtsJ_dom"/>
</dbReference>
<dbReference type="InterPro" id="IPR025816">
    <property type="entry name" value="RrmJ-type_MeTrfase"/>
</dbReference>
<dbReference type="InterPro" id="IPR029063">
    <property type="entry name" value="SAM-dependent_MTases_sf"/>
</dbReference>
<dbReference type="PANTHER" id="PTHR16121:SF0">
    <property type="entry name" value="CAP-SPECIFIC MRNA (NUCLEOSIDE-2'-O-)-METHYLTRANSFERASE 1"/>
    <property type="match status" value="1"/>
</dbReference>
<dbReference type="PANTHER" id="PTHR16121">
    <property type="entry name" value="CAP-SPECIFIC MRNA (NUCLEOSIDE-2'-O-)-METHYLTRANSFERASE 1-RELATED"/>
    <property type="match status" value="1"/>
</dbReference>
<dbReference type="Pfam" id="PF01728">
    <property type="entry name" value="FtsJ"/>
    <property type="match status" value="1"/>
</dbReference>
<dbReference type="Pfam" id="PF01585">
    <property type="entry name" value="G-patch"/>
    <property type="match status" value="1"/>
</dbReference>
<dbReference type="SMART" id="SM00443">
    <property type="entry name" value="G_patch"/>
    <property type="match status" value="1"/>
</dbReference>
<dbReference type="SUPFAM" id="SSF53335">
    <property type="entry name" value="S-adenosyl-L-methionine-dependent methyltransferases"/>
    <property type="match status" value="1"/>
</dbReference>
<dbReference type="PROSITE" id="PS50174">
    <property type="entry name" value="G_PATCH"/>
    <property type="match status" value="1"/>
</dbReference>
<dbReference type="PROSITE" id="PS51613">
    <property type="entry name" value="SAM_MT_RRMJ"/>
    <property type="match status" value="1"/>
</dbReference>
<proteinExistence type="evidence at protein level"/>
<keyword id="KW-0963">Cytoplasm</keyword>
<keyword id="KW-0489">Methyltransferase</keyword>
<keyword id="KW-0506">mRNA capping</keyword>
<keyword id="KW-0507">mRNA processing</keyword>
<keyword id="KW-0539">Nucleus</keyword>
<keyword id="KW-1185">Reference proteome</keyword>
<keyword id="KW-0949">S-adenosyl-L-methionine</keyword>
<keyword id="KW-0808">Transferase</keyword>
<reference key="1">
    <citation type="journal article" date="2000" name="Science">
        <title>The genome sequence of Drosophila melanogaster.</title>
        <authorList>
            <person name="Adams M.D."/>
            <person name="Celniker S.E."/>
            <person name="Holt R.A."/>
            <person name="Evans C.A."/>
            <person name="Gocayne J.D."/>
            <person name="Amanatides P.G."/>
            <person name="Scherer S.E."/>
            <person name="Li P.W."/>
            <person name="Hoskins R.A."/>
            <person name="Galle R.F."/>
            <person name="George R.A."/>
            <person name="Lewis S.E."/>
            <person name="Richards S."/>
            <person name="Ashburner M."/>
            <person name="Henderson S.N."/>
            <person name="Sutton G.G."/>
            <person name="Wortman J.R."/>
            <person name="Yandell M.D."/>
            <person name="Zhang Q."/>
            <person name="Chen L.X."/>
            <person name="Brandon R.C."/>
            <person name="Rogers Y.-H.C."/>
            <person name="Blazej R.G."/>
            <person name="Champe M."/>
            <person name="Pfeiffer B.D."/>
            <person name="Wan K.H."/>
            <person name="Doyle C."/>
            <person name="Baxter E.G."/>
            <person name="Helt G."/>
            <person name="Nelson C.R."/>
            <person name="Miklos G.L.G."/>
            <person name="Abril J.F."/>
            <person name="Agbayani A."/>
            <person name="An H.-J."/>
            <person name="Andrews-Pfannkoch C."/>
            <person name="Baldwin D."/>
            <person name="Ballew R.M."/>
            <person name="Basu A."/>
            <person name="Baxendale J."/>
            <person name="Bayraktaroglu L."/>
            <person name="Beasley E.M."/>
            <person name="Beeson K.Y."/>
            <person name="Benos P.V."/>
            <person name="Berman B.P."/>
            <person name="Bhandari D."/>
            <person name="Bolshakov S."/>
            <person name="Borkova D."/>
            <person name="Botchan M.R."/>
            <person name="Bouck J."/>
            <person name="Brokstein P."/>
            <person name="Brottier P."/>
            <person name="Burtis K.C."/>
            <person name="Busam D.A."/>
            <person name="Butler H."/>
            <person name="Cadieu E."/>
            <person name="Center A."/>
            <person name="Chandra I."/>
            <person name="Cherry J.M."/>
            <person name="Cawley S."/>
            <person name="Dahlke C."/>
            <person name="Davenport L.B."/>
            <person name="Davies P."/>
            <person name="de Pablos B."/>
            <person name="Delcher A."/>
            <person name="Deng Z."/>
            <person name="Mays A.D."/>
            <person name="Dew I."/>
            <person name="Dietz S.M."/>
            <person name="Dodson K."/>
            <person name="Doup L.E."/>
            <person name="Downes M."/>
            <person name="Dugan-Rocha S."/>
            <person name="Dunkov B.C."/>
            <person name="Dunn P."/>
            <person name="Durbin K.J."/>
            <person name="Evangelista C.C."/>
            <person name="Ferraz C."/>
            <person name="Ferriera S."/>
            <person name="Fleischmann W."/>
            <person name="Fosler C."/>
            <person name="Gabrielian A.E."/>
            <person name="Garg N.S."/>
            <person name="Gelbart W.M."/>
            <person name="Glasser K."/>
            <person name="Glodek A."/>
            <person name="Gong F."/>
            <person name="Gorrell J.H."/>
            <person name="Gu Z."/>
            <person name="Guan P."/>
            <person name="Harris M."/>
            <person name="Harris N.L."/>
            <person name="Harvey D.A."/>
            <person name="Heiman T.J."/>
            <person name="Hernandez J.R."/>
            <person name="Houck J."/>
            <person name="Hostin D."/>
            <person name="Houston K.A."/>
            <person name="Howland T.J."/>
            <person name="Wei M.-H."/>
            <person name="Ibegwam C."/>
            <person name="Jalali M."/>
            <person name="Kalush F."/>
            <person name="Karpen G.H."/>
            <person name="Ke Z."/>
            <person name="Kennison J.A."/>
            <person name="Ketchum K.A."/>
            <person name="Kimmel B.E."/>
            <person name="Kodira C.D."/>
            <person name="Kraft C.L."/>
            <person name="Kravitz S."/>
            <person name="Kulp D."/>
            <person name="Lai Z."/>
            <person name="Lasko P."/>
            <person name="Lei Y."/>
            <person name="Levitsky A.A."/>
            <person name="Li J.H."/>
            <person name="Li Z."/>
            <person name="Liang Y."/>
            <person name="Lin X."/>
            <person name="Liu X."/>
            <person name="Mattei B."/>
            <person name="McIntosh T.C."/>
            <person name="McLeod M.P."/>
            <person name="McPherson D."/>
            <person name="Merkulov G."/>
            <person name="Milshina N.V."/>
            <person name="Mobarry C."/>
            <person name="Morris J."/>
            <person name="Moshrefi A."/>
            <person name="Mount S.M."/>
            <person name="Moy M."/>
            <person name="Murphy B."/>
            <person name="Murphy L."/>
            <person name="Muzny D.M."/>
            <person name="Nelson D.L."/>
            <person name="Nelson D.R."/>
            <person name="Nelson K.A."/>
            <person name="Nixon K."/>
            <person name="Nusskern D.R."/>
            <person name="Pacleb J.M."/>
            <person name="Palazzolo M."/>
            <person name="Pittman G.S."/>
            <person name="Pan S."/>
            <person name="Pollard J."/>
            <person name="Puri V."/>
            <person name="Reese M.G."/>
            <person name="Reinert K."/>
            <person name="Remington K."/>
            <person name="Saunders R.D.C."/>
            <person name="Scheeler F."/>
            <person name="Shen H."/>
            <person name="Shue B.C."/>
            <person name="Siden-Kiamos I."/>
            <person name="Simpson M."/>
            <person name="Skupski M.P."/>
            <person name="Smith T.J."/>
            <person name="Spier E."/>
            <person name="Spradling A.C."/>
            <person name="Stapleton M."/>
            <person name="Strong R."/>
            <person name="Sun E."/>
            <person name="Svirskas R."/>
            <person name="Tector C."/>
            <person name="Turner R."/>
            <person name="Venter E."/>
            <person name="Wang A.H."/>
            <person name="Wang X."/>
            <person name="Wang Z.-Y."/>
            <person name="Wassarman D.A."/>
            <person name="Weinstock G.M."/>
            <person name="Weissenbach J."/>
            <person name="Williams S.M."/>
            <person name="Woodage T."/>
            <person name="Worley K.C."/>
            <person name="Wu D."/>
            <person name="Yang S."/>
            <person name="Yao Q.A."/>
            <person name="Ye J."/>
            <person name="Yeh R.-F."/>
            <person name="Zaveri J.S."/>
            <person name="Zhan M."/>
            <person name="Zhang G."/>
            <person name="Zhao Q."/>
            <person name="Zheng L."/>
            <person name="Zheng X.H."/>
            <person name="Zhong F.N."/>
            <person name="Zhong W."/>
            <person name="Zhou X."/>
            <person name="Zhu S.C."/>
            <person name="Zhu X."/>
            <person name="Smith H.O."/>
            <person name="Gibbs R.A."/>
            <person name="Myers E.W."/>
            <person name="Rubin G.M."/>
            <person name="Venter J.C."/>
        </authorList>
    </citation>
    <scope>NUCLEOTIDE SEQUENCE [LARGE SCALE GENOMIC DNA]</scope>
    <source>
        <strain>Berkeley</strain>
    </source>
</reference>
<reference key="2">
    <citation type="journal article" date="2002" name="Genome Biol.">
        <title>Annotation of the Drosophila melanogaster euchromatic genome: a systematic review.</title>
        <authorList>
            <person name="Misra S."/>
            <person name="Crosby M.A."/>
            <person name="Mungall C.J."/>
            <person name="Matthews B.B."/>
            <person name="Campbell K.S."/>
            <person name="Hradecky P."/>
            <person name="Huang Y."/>
            <person name="Kaminker J.S."/>
            <person name="Millburn G.H."/>
            <person name="Prochnik S.E."/>
            <person name="Smith C.D."/>
            <person name="Tupy J.L."/>
            <person name="Whitfield E.J."/>
            <person name="Bayraktaroglu L."/>
            <person name="Berman B.P."/>
            <person name="Bettencourt B.R."/>
            <person name="Celniker S.E."/>
            <person name="de Grey A.D.N.J."/>
            <person name="Drysdale R.A."/>
            <person name="Harris N.L."/>
            <person name="Richter J."/>
            <person name="Russo S."/>
            <person name="Schroeder A.J."/>
            <person name="Shu S.Q."/>
            <person name="Stapleton M."/>
            <person name="Yamada C."/>
            <person name="Ashburner M."/>
            <person name="Gelbart W.M."/>
            <person name="Rubin G.M."/>
            <person name="Lewis S.E."/>
        </authorList>
    </citation>
    <scope>GENOME REANNOTATION</scope>
    <source>
        <strain>Berkeley</strain>
    </source>
</reference>
<reference key="3">
    <citation type="journal article" date="2002" name="Genome Biol.">
        <title>A Drosophila full-length cDNA resource.</title>
        <authorList>
            <person name="Stapleton M."/>
            <person name="Carlson J.W."/>
            <person name="Brokstein P."/>
            <person name="Yu C."/>
            <person name="Champe M."/>
            <person name="George R.A."/>
            <person name="Guarin H."/>
            <person name="Kronmiller B."/>
            <person name="Pacleb J.M."/>
            <person name="Park S."/>
            <person name="Wan K.H."/>
            <person name="Rubin G.M."/>
            <person name="Celniker S.E."/>
        </authorList>
    </citation>
    <scope>NUCLEOTIDE SEQUENCE [LARGE SCALE MRNA]</scope>
    <source>
        <strain>Berkeley</strain>
        <tissue>Embryo</tissue>
    </source>
</reference>
<reference key="4">
    <citation type="journal article" date="2007" name="Genome Res.">
        <title>Hitchhiking effects of recurrent beneficial amino acid substitutions in the Drosophila melanogaster genome.</title>
        <authorList>
            <person name="Andolfatto P."/>
        </authorList>
    </citation>
    <scope>NUCLEOTIDE SEQUENCE [GENOMIC DNA] OF 279-514</scope>
    <source>
        <strain>ZW104</strain>
        <strain>ZW109</strain>
        <strain>ZW122</strain>
        <strain>ZW123</strain>
        <strain>ZW133</strain>
        <strain>ZW136</strain>
        <strain>ZW139</strain>
        <strain>ZW140</strain>
        <strain>ZW141</strain>
        <strain>ZW142</strain>
        <strain>ZW143</strain>
        <strain>ZW144</strain>
    </source>
</reference>
<reference key="5">
    <citation type="journal article" date="2020" name="Insect Biochem. Mol. Biol.">
        <title>Roles for Drosophila cap1 2'-O-ribose methyltransferase in the small RNA silencing pathway associated with Argonaute 2.</title>
        <authorList>
            <person name="Lee S."/>
            <person name="Hong J.S."/>
            <person name="Lim D.H."/>
            <person name="Lee Y.S."/>
        </authorList>
    </citation>
    <scope>FUNCTION</scope>
    <scope>CATALYTIC ACTIVITY</scope>
    <scope>INTERACTION WITH R2D2</scope>
    <scope>SUBCELLULAR LOCATION</scope>
    <scope>ACTIVE SITE</scope>
    <scope>MUTAGENESIS OF LYS-179 AND 231-TRP--SER-788</scope>
</reference>
<evidence type="ECO:0000250" key="1">
    <source>
        <dbReference type="UniProtKB" id="Q8N1G2"/>
    </source>
</evidence>
<evidence type="ECO:0000255" key="2">
    <source>
        <dbReference type="PROSITE-ProRule" id="PRU00092"/>
    </source>
</evidence>
<evidence type="ECO:0000255" key="3">
    <source>
        <dbReference type="PROSITE-ProRule" id="PRU00945"/>
    </source>
</evidence>
<evidence type="ECO:0000269" key="4">
    <source>
    </source>
</evidence>
<evidence type="ECO:0000303" key="5">
    <source>
    </source>
</evidence>
<evidence type="ECO:0000305" key="6"/>
<evidence type="ECO:0000312" key="7">
    <source>
        <dbReference type="FlyBase" id="FBgn0029693"/>
    </source>
</evidence>
<name>CMTR1_DROME</name>
<feature type="chain" id="PRO_0000399801" description="Cap-specific mRNA (nucleoside-2'-O-)-methyltransferase 1">
    <location>
        <begin position="1"/>
        <end position="788"/>
    </location>
</feature>
<feature type="domain" description="G-patch" evidence="2">
    <location>
        <begin position="25"/>
        <end position="71"/>
    </location>
</feature>
<feature type="domain" description="RrmJ-type SAM-dependent 2'-O-MTase" evidence="3">
    <location>
        <begin position="171"/>
        <end position="384"/>
    </location>
</feature>
<feature type="active site" evidence="4">
    <location>
        <position position="179"/>
    </location>
</feature>
<feature type="active site" evidence="1">
    <location>
        <position position="298"/>
    </location>
</feature>
<feature type="active site" description="Proton acceptor" evidence="3">
    <location>
        <position position="338"/>
    </location>
</feature>
<feature type="binding site" evidence="1">
    <location>
        <begin position="143"/>
        <end position="147"/>
    </location>
    <ligand>
        <name>substrate</name>
    </ligand>
</feature>
<feature type="binding site" evidence="1">
    <location>
        <position position="158"/>
    </location>
    <ligand>
        <name>substrate</name>
    </ligand>
</feature>
<feature type="binding site" evidence="1">
    <location>
        <position position="174"/>
    </location>
    <ligand>
        <name>S-adenosyl-L-methionine</name>
        <dbReference type="ChEBI" id="CHEBI:59789"/>
    </ligand>
</feature>
<feature type="binding site" evidence="1">
    <location>
        <begin position="215"/>
        <end position="221"/>
    </location>
    <ligand>
        <name>S-adenosyl-L-methionine</name>
        <dbReference type="ChEBI" id="CHEBI:59789"/>
    </ligand>
</feature>
<feature type="binding site" evidence="1">
    <location>
        <begin position="308"/>
        <end position="310"/>
    </location>
    <ligand>
        <name>substrate</name>
    </ligand>
</feature>
<feature type="binding site" evidence="1">
    <location>
        <position position="373"/>
    </location>
    <ligand>
        <name>substrate</name>
    </ligand>
</feature>
<feature type="mutagenesis site" description="Loss of activity." evidence="4">
    <original>K</original>
    <variation>A</variation>
    <location>
        <position position="179"/>
    </location>
</feature>
<feature type="mutagenesis site" description="Impaired cap1 2'-O-ribose methylation, siRNA biogenesis and RISC complex assembly. Flies are viable with no visible phenotype. No effect on miRNA biogenesis." evidence="4">
    <location>
        <begin position="231"/>
        <end position="788"/>
    </location>
</feature>
<feature type="sequence conflict" description="In Ref. 3; AAL49198." evidence="6" ref="3">
    <original>F</original>
    <variation>L</variation>
    <location>
        <position position="236"/>
    </location>
</feature>
<feature type="sequence conflict" description="In Ref. 3; AAL49198." evidence="6" ref="3">
    <original>Q</original>
    <variation>R</variation>
    <location>
        <position position="465"/>
    </location>
</feature>
<sequence length="788" mass="90556">MDEPSDDENSEPTPKKIKREWVKSYSNKAMEMMKKMGYENDKGLGKSNQGRLEPIIAVQQDGRRGFGLKLDTVQSSAGQWDPACEELEIPEPVLWLHNPGSRADAYSLDQLMGHLVTGEKKLTLDGETRYCDPAILHHILNAKTVFDDLNDNEKRRARSRCNPFETIRSSIFLNRAAVKMANIDSMCNFMFTNPRDPAGQTLVAPDELLYFTDMCAGPGGFSEYVLYRKSWEAKGFGFTLRGANDFKLEKFFAASPESFDTFYGVKEDGNIFDESNQDSLNEYIRMHTPQGVHFAMADGGFSVEGQKNIQEILSKQLYLCQFLTALKILRPNGSFVCKVFDLFTPFSVGLVYLMYKCFQQIAIIKPNSSRPANSERYLVCKYKRSDAETAGIVAYLNTVNLMLSDESQLDENDVLEIFNANELAEDEDFLRYIIDSNNAIGKKQIVGLRKIAAFAQNLELKETKQSEVRQECLKRWGLPDKLRQAPENKPTDRLLDELLADWANERSWLSLPATEMKGVASLNATIKNVADWYFVPVGREETNINACSLFLCKSRGNLLRYTEHKKWELVETAFEVQPRSIFFGQIVYEFYGEGRTIQRMAALHIIDGICLGGVDIRRRPYRERVSMCDKFARSLNKPYRKDRTFGALRSKPLFRLQDMGSFFANMRHYVLKDNSQRLGFALDDNKFFVPGGIMMFCELTNNYVSAHSRSRGQLYYFNVRNKESYYKDQIPRNKADEIFASFRFSFSCRLLWKWTDLRQVEELATEDNPKILFRSDFVKFIADKLGHS</sequence>
<accession>Q9W4N2</accession>
<accession>A9YI61</accession>
<accession>Q8SYG1</accession>
<gene>
    <name evidence="7" type="primary">Cmtr1</name>
    <name evidence="7" type="ORF">CG6379</name>
</gene>